<organism>
    <name type="scientific">Botryococcus braunii</name>
    <name type="common">Green alga</name>
    <dbReference type="NCBI Taxonomy" id="38881"/>
    <lineage>
        <taxon>Eukaryota</taxon>
        <taxon>Viridiplantae</taxon>
        <taxon>Chlorophyta</taxon>
        <taxon>core chlorophytes</taxon>
        <taxon>Trebouxiophyceae</taxon>
        <taxon>Trebouxiophyceae incertae sedis</taxon>
        <taxon>Elliptochloris clade</taxon>
        <taxon>Botryococcus</taxon>
    </lineage>
</organism>
<proteinExistence type="evidence at transcript level"/>
<name>SMTL1_BOTBR</name>
<feature type="chain" id="PRO_0000421358" description="Sterol methyltransferase-like 1">
    <location>
        <begin position="1"/>
        <end position="389"/>
    </location>
</feature>
<feature type="transmembrane region" description="Helical" evidence="1">
    <location>
        <begin position="25"/>
        <end position="45"/>
    </location>
</feature>
<protein>
    <recommendedName>
        <fullName>Sterol methyltransferase-like 1</fullName>
        <ecNumber>2.1.1.-</ecNumber>
    </recommendedName>
</protein>
<evidence type="ECO:0000255" key="1"/>
<evidence type="ECO:0000255" key="2">
    <source>
        <dbReference type="PROSITE-ProRule" id="PRU01022"/>
    </source>
</evidence>
<evidence type="ECO:0000269" key="3">
    <source>
    </source>
</evidence>
<evidence type="ECO:0000305" key="4"/>
<dbReference type="EC" id="2.1.1.-"/>
<dbReference type="EMBL" id="JN828965">
    <property type="protein sequence ID" value="AEY68259.1"/>
    <property type="molecule type" value="mRNA"/>
</dbReference>
<dbReference type="SMR" id="H2E7T8"/>
<dbReference type="GO" id="GO:0005783">
    <property type="term" value="C:endoplasmic reticulum"/>
    <property type="evidence" value="ECO:0007669"/>
    <property type="project" value="UniProtKB-KW"/>
</dbReference>
<dbReference type="GO" id="GO:0016020">
    <property type="term" value="C:membrane"/>
    <property type="evidence" value="ECO:0007669"/>
    <property type="project" value="UniProtKB-KW"/>
</dbReference>
<dbReference type="GO" id="GO:0008757">
    <property type="term" value="F:S-adenosylmethionine-dependent methyltransferase activity"/>
    <property type="evidence" value="ECO:0007669"/>
    <property type="project" value="InterPro"/>
</dbReference>
<dbReference type="GO" id="GO:0032259">
    <property type="term" value="P:methylation"/>
    <property type="evidence" value="ECO:0007669"/>
    <property type="project" value="UniProtKB-KW"/>
</dbReference>
<dbReference type="GO" id="GO:0006694">
    <property type="term" value="P:steroid biosynthetic process"/>
    <property type="evidence" value="ECO:0007669"/>
    <property type="project" value="InterPro"/>
</dbReference>
<dbReference type="CDD" id="cd02440">
    <property type="entry name" value="AdoMet_MTases"/>
    <property type="match status" value="1"/>
</dbReference>
<dbReference type="Gene3D" id="3.40.50.150">
    <property type="entry name" value="Vaccinia Virus protein VP39"/>
    <property type="match status" value="1"/>
</dbReference>
<dbReference type="InterPro" id="IPR013216">
    <property type="entry name" value="Methyltransf_11"/>
</dbReference>
<dbReference type="InterPro" id="IPR030384">
    <property type="entry name" value="MeTrfase_SMT"/>
</dbReference>
<dbReference type="InterPro" id="IPR029063">
    <property type="entry name" value="SAM-dependent_MTases_sf"/>
</dbReference>
<dbReference type="InterPro" id="IPR013705">
    <property type="entry name" value="Sterol_MeTrfase_C"/>
</dbReference>
<dbReference type="PANTHER" id="PTHR44742">
    <property type="match status" value="1"/>
</dbReference>
<dbReference type="PANTHER" id="PTHR44742:SF2">
    <property type="entry name" value="24-METHYLENESTEROL C-METHYLTRANSFERASE 2"/>
    <property type="match status" value="1"/>
</dbReference>
<dbReference type="Pfam" id="PF08241">
    <property type="entry name" value="Methyltransf_11"/>
    <property type="match status" value="1"/>
</dbReference>
<dbReference type="Pfam" id="PF08498">
    <property type="entry name" value="Sterol_MT_C"/>
    <property type="match status" value="1"/>
</dbReference>
<dbReference type="SUPFAM" id="SSF53335">
    <property type="entry name" value="S-adenosyl-L-methionine-dependent methyltransferases"/>
    <property type="match status" value="1"/>
</dbReference>
<dbReference type="PROSITE" id="PS51685">
    <property type="entry name" value="SAM_MT_ERG6_SMT"/>
    <property type="match status" value="1"/>
</dbReference>
<gene>
    <name type="primary">SMT-1</name>
</gene>
<sequence>MASELFATYYPRVVEAAQQLAPWQIAAGVTAAVVIGGYIWIITELRSPRRTGTSLFKLSGGGIKKHDVAKFMDGYEKSYKTQEDGALTWHHISKEDSVKMVNTFYDLVTDAYEWAWDISFHFSCRPVWANFAQAQVLHECRIANLARIQPGMKVIDVGTGVGNPGRTIASLTGAHVTGVTINAYQIKRALHHTKKAGLLDMYKPVQADFTDMPFADESFDAAFAIEATCHAPKLEQVYAEVYRVLKPGAYFAVYEAVSKPNFDPKNKRHVEIINSLVYGNGIPDMRTWKEAEEAGKKVGFKLHFSYDAGEASSVLAPWWERPRNLVNTGVIAYTKFAIKVCDKIGILPRDYAKFAKCVGDCIPDAVESGELGIFTPMYVYVWQKPEKST</sequence>
<accession>H2E7T8</accession>
<reference key="1">
    <citation type="journal article" date="2012" name="J. Biol. Chem.">
        <title>Functional identification of triterpene methyltransferases from Botryococcus braunii race B.</title>
        <authorList>
            <person name="Niehaus T.D."/>
            <person name="Kinison S."/>
            <person name="Okada S."/>
            <person name="Yeo Y.S."/>
            <person name="Bell S.A."/>
            <person name="Cui P."/>
            <person name="Devarenne T.P."/>
            <person name="Chappell J."/>
        </authorList>
    </citation>
    <scope>NUCLEOTIDE SEQUENCE [MRNA]</scope>
    <scope>FUNCTION</scope>
</reference>
<keyword id="KW-0256">Endoplasmic reticulum</keyword>
<keyword id="KW-0444">Lipid biosynthesis</keyword>
<keyword id="KW-0443">Lipid metabolism</keyword>
<keyword id="KW-0472">Membrane</keyword>
<keyword id="KW-0489">Methyltransferase</keyword>
<keyword id="KW-0492">Microsome</keyword>
<keyword id="KW-0949">S-adenosyl-L-methionine</keyword>
<keyword id="KW-0808">Transferase</keyword>
<keyword id="KW-0812">Transmembrane</keyword>
<keyword id="KW-1133">Transmembrane helix</keyword>
<comment type="function">
    <text evidence="3">Unable to convert squalene, botryococcene, cycloartenol, zymosterol or lanosterol to mono-, di-, tri- or tetramethylated derivatives.</text>
</comment>
<comment type="subcellular location">
    <subcellularLocation>
        <location evidence="4">Microsome membrane</location>
        <topology evidence="4">Single-pass membrane protein</topology>
    </subcellularLocation>
</comment>
<comment type="similarity">
    <text evidence="2">Belongs to the class I-like SAM-binding methyltransferase superfamily. Erg6/SMT family.</text>
</comment>